<comment type="function">
    <text evidence="2">Transaldolase important for the balance of metabolites in the pentose-phosphate pathway. Involved in xylose fermentation to ethanol.</text>
</comment>
<comment type="catalytic activity">
    <reaction evidence="1 2">
        <text>D-sedoheptulose 7-phosphate + D-glyceraldehyde 3-phosphate = D-erythrose 4-phosphate + beta-D-fructose 6-phosphate</text>
        <dbReference type="Rhea" id="RHEA:17053"/>
        <dbReference type="ChEBI" id="CHEBI:16897"/>
        <dbReference type="ChEBI" id="CHEBI:57483"/>
        <dbReference type="ChEBI" id="CHEBI:57634"/>
        <dbReference type="ChEBI" id="CHEBI:59776"/>
        <dbReference type="EC" id="2.2.1.2"/>
    </reaction>
</comment>
<comment type="biophysicochemical properties">
    <kinetics>
        <KM evidence="2">0.49 mM for D-erythrose 4-phosphate</KM>
        <KM evidence="2">6.66 mM for D-fructose 6-phosphate</KM>
        <text>kcat is 4114 min(-1) with D-erythrose 4-phosphate as substrate and 4151 min(-1) with D-fructose 6-phosphate as substrate.</text>
    </kinetics>
    <phDependence>
        <text evidence="2">Optimum pH is 7.5.</text>
    </phDependence>
    <temperatureDependence>
        <text evidence="2">Optimum temperature is 40-45 degrees Celsius.</text>
    </temperatureDependence>
</comment>
<comment type="pathway">
    <text>Carbohydrate degradation; pentose phosphate pathway; D-glyceraldehyde 3-phosphate and beta-D-fructose 6-phosphate from D-ribose 5-phosphate and D-xylulose 5-phosphate (non-oxidative stage): step 2/3.</text>
</comment>
<comment type="subunit">
    <text evidence="2">Monomer.</text>
</comment>
<comment type="similarity">
    <text evidence="3">Belongs to the transaldolase family. Type 1 subfamily.</text>
</comment>
<keyword id="KW-0570">Pentose shunt</keyword>
<keyword id="KW-0704">Schiff base</keyword>
<keyword id="KW-0808">Transferase</keyword>
<name>TAL1_FUSO4</name>
<organism>
    <name type="scientific">Fusarium oxysporum f. sp. lycopersici (strain 4287 / CBS 123668 / FGSC 9935 / NRRL 34936)</name>
    <name type="common">Fusarium vascular wilt of tomato</name>
    <dbReference type="NCBI Taxonomy" id="426428"/>
    <lineage>
        <taxon>Eukaryota</taxon>
        <taxon>Fungi</taxon>
        <taxon>Dikarya</taxon>
        <taxon>Ascomycota</taxon>
        <taxon>Pezizomycotina</taxon>
        <taxon>Sordariomycetes</taxon>
        <taxon>Hypocreomycetidae</taxon>
        <taxon>Hypocreales</taxon>
        <taxon>Nectriaceae</taxon>
        <taxon>Fusarium</taxon>
        <taxon>Fusarium oxysporum species complex</taxon>
    </lineage>
</organism>
<gene>
    <name type="ORF">FOXG_03074</name>
</gene>
<dbReference type="EC" id="2.2.1.2"/>
<dbReference type="EMBL" id="AAXH01000183">
    <property type="status" value="NOT_ANNOTATED_CDS"/>
    <property type="molecule type" value="Genomic_DNA"/>
</dbReference>
<dbReference type="RefSeq" id="XP_018236899.1">
    <property type="nucleotide sequence ID" value="XM_018380598.1"/>
</dbReference>
<dbReference type="SMR" id="J9MJK9"/>
<dbReference type="STRING" id="426428.J9MJK9"/>
<dbReference type="EnsemblFungi" id="FOXG_03074T0">
    <property type="protein sequence ID" value="FOXG_03074P0"/>
    <property type="gene ID" value="FOXG_03074"/>
</dbReference>
<dbReference type="GeneID" id="28945221"/>
<dbReference type="KEGG" id="fox:FOXG_03074"/>
<dbReference type="VEuPathDB" id="FungiDB:FOXG_03074"/>
<dbReference type="HOGENOM" id="CLU_047470_0_1_1"/>
<dbReference type="OMA" id="THAEFLW"/>
<dbReference type="UniPathway" id="UPA00115">
    <property type="reaction ID" value="UER00414"/>
</dbReference>
<dbReference type="GO" id="GO:0005737">
    <property type="term" value="C:cytoplasm"/>
    <property type="evidence" value="ECO:0007669"/>
    <property type="project" value="InterPro"/>
</dbReference>
<dbReference type="GO" id="GO:0004801">
    <property type="term" value="F:transaldolase activity"/>
    <property type="evidence" value="ECO:0000314"/>
    <property type="project" value="UniProtKB"/>
</dbReference>
<dbReference type="GO" id="GO:0044577">
    <property type="term" value="P:D-xylose catabolic process to ethanol"/>
    <property type="evidence" value="ECO:0000314"/>
    <property type="project" value="UniProtKB"/>
</dbReference>
<dbReference type="GO" id="GO:0009052">
    <property type="term" value="P:pentose-phosphate shunt, non-oxidative branch"/>
    <property type="evidence" value="ECO:0000314"/>
    <property type="project" value="UniProtKB"/>
</dbReference>
<dbReference type="CDD" id="cd00957">
    <property type="entry name" value="Transaldolase_TalAB"/>
    <property type="match status" value="1"/>
</dbReference>
<dbReference type="FunFam" id="3.20.20.70:FF:000088">
    <property type="entry name" value="Transaldolase"/>
    <property type="match status" value="1"/>
</dbReference>
<dbReference type="Gene3D" id="3.20.20.70">
    <property type="entry name" value="Aldolase class I"/>
    <property type="match status" value="1"/>
</dbReference>
<dbReference type="InterPro" id="IPR013785">
    <property type="entry name" value="Aldolase_TIM"/>
</dbReference>
<dbReference type="InterPro" id="IPR001585">
    <property type="entry name" value="TAL/FSA"/>
</dbReference>
<dbReference type="InterPro" id="IPR004730">
    <property type="entry name" value="Transaldolase_1"/>
</dbReference>
<dbReference type="InterPro" id="IPR018225">
    <property type="entry name" value="Transaldolase_AS"/>
</dbReference>
<dbReference type="NCBIfam" id="TIGR00874">
    <property type="entry name" value="talAB"/>
    <property type="match status" value="1"/>
</dbReference>
<dbReference type="PANTHER" id="PTHR10683">
    <property type="entry name" value="TRANSALDOLASE"/>
    <property type="match status" value="1"/>
</dbReference>
<dbReference type="PANTHER" id="PTHR10683:SF18">
    <property type="entry name" value="TRANSALDOLASE"/>
    <property type="match status" value="1"/>
</dbReference>
<dbReference type="Pfam" id="PF00923">
    <property type="entry name" value="TAL_FSA"/>
    <property type="match status" value="1"/>
</dbReference>
<dbReference type="SUPFAM" id="SSF51569">
    <property type="entry name" value="Aldolase"/>
    <property type="match status" value="1"/>
</dbReference>
<dbReference type="PROSITE" id="PS01054">
    <property type="entry name" value="TRANSALDOLASE_1"/>
    <property type="match status" value="1"/>
</dbReference>
<dbReference type="PROSITE" id="PS00958">
    <property type="entry name" value="TRANSALDOLASE_2"/>
    <property type="match status" value="1"/>
</dbReference>
<reference key="1">
    <citation type="journal article" date="2010" name="Nature">
        <title>Comparative genomics reveals mobile pathogenicity chromosomes in Fusarium.</title>
        <authorList>
            <person name="Ma L.-J."/>
            <person name="van der Does H.C."/>
            <person name="Borkovich K.A."/>
            <person name="Coleman J.J."/>
            <person name="Daboussi M.-J."/>
            <person name="Di Pietro A."/>
            <person name="Dufresne M."/>
            <person name="Freitag M."/>
            <person name="Grabherr M."/>
            <person name="Henrissat B."/>
            <person name="Houterman P.M."/>
            <person name="Kang S."/>
            <person name="Shim W.-B."/>
            <person name="Woloshuk C."/>
            <person name="Xie X."/>
            <person name="Xu J.-R."/>
            <person name="Antoniw J."/>
            <person name="Baker S.E."/>
            <person name="Bluhm B.H."/>
            <person name="Breakspear A."/>
            <person name="Brown D.W."/>
            <person name="Butchko R.A.E."/>
            <person name="Chapman S."/>
            <person name="Coulson R."/>
            <person name="Coutinho P.M."/>
            <person name="Danchin E.G.J."/>
            <person name="Diener A."/>
            <person name="Gale L.R."/>
            <person name="Gardiner D.M."/>
            <person name="Goff S."/>
            <person name="Hammond-Kosack K.E."/>
            <person name="Hilburn K."/>
            <person name="Hua-Van A."/>
            <person name="Jonkers W."/>
            <person name="Kazan K."/>
            <person name="Kodira C.D."/>
            <person name="Koehrsen M."/>
            <person name="Kumar L."/>
            <person name="Lee Y.-H."/>
            <person name="Li L."/>
            <person name="Manners J.M."/>
            <person name="Miranda-Saavedra D."/>
            <person name="Mukherjee M."/>
            <person name="Park G."/>
            <person name="Park J."/>
            <person name="Park S.-Y."/>
            <person name="Proctor R.H."/>
            <person name="Regev A."/>
            <person name="Ruiz-Roldan M.C."/>
            <person name="Sain D."/>
            <person name="Sakthikumar S."/>
            <person name="Sykes S."/>
            <person name="Schwartz D.C."/>
            <person name="Turgeon B.G."/>
            <person name="Wapinski I."/>
            <person name="Yoder O."/>
            <person name="Young S."/>
            <person name="Zeng Q."/>
            <person name="Zhou S."/>
            <person name="Galagan J."/>
            <person name="Cuomo C.A."/>
            <person name="Kistler H.C."/>
            <person name="Rep M."/>
        </authorList>
    </citation>
    <scope>NUCLEOTIDE SEQUENCE [LARGE SCALE GENOMIC DNA]</scope>
    <source>
        <strain>4287 / CBS 123668 / FGSC 9935 / NRRL 34936</strain>
    </source>
</reference>
<reference key="2">
    <citation type="journal article" date="2008" name="Process Biochem.">
        <title>Purification, characterization and mass spectrometric sequencing of transaldolase from Fusarium oxysporum.</title>
        <authorList>
            <person name="Kourtoglou E."/>
            <person name="Mamma D."/>
            <person name="Topakas E."/>
            <person name="Christakopoulos P."/>
        </authorList>
    </citation>
    <scope>FUNCTION</scope>
    <scope>CATALYTIC ACTIVITY</scope>
    <scope>BIOPHYSICOCHEMICAL PROPERTIES</scope>
    <scope>SUBUNIT</scope>
    <scope>IDENTIFICATION BY MASS SPECTROMETRY</scope>
</reference>
<proteinExistence type="evidence at protein level"/>
<protein>
    <recommendedName>
        <fullName>Transaldolase</fullName>
        <shortName>FoTal</shortName>
        <ecNumber>2.2.1.2</ecNumber>
    </recommendedName>
</protein>
<feature type="chain" id="PRO_0000430144" description="Transaldolase">
    <location>
        <begin position="1"/>
        <end position="323"/>
    </location>
</feature>
<feature type="active site" description="Schiff-base intermediate with substrate" evidence="1">
    <location>
        <position position="133"/>
    </location>
</feature>
<evidence type="ECO:0000255" key="1">
    <source>
        <dbReference type="PROSITE-ProRule" id="PRU10019"/>
    </source>
</evidence>
<evidence type="ECO:0000269" key="2">
    <source ref="2"/>
</evidence>
<evidence type="ECO:0000305" key="3"/>
<sequence>MSSSLEQLKATGTTVVSDSGDFASIGKYKPQDATTNPSLILAASKKAEYAKLIDVAIDYAKQKGGPIDQQVDDALDRLLVEFGKEILKIIPGKVSTEVDARYSFDTEASVNKALHLIELYGEQGISKDRILIKIAATWEGIKAAEILQRDHGINTNLTLMFSLVQAIGAAEAGAYLISPFVGRILDWFKASTKKEYSKEEDPGVQSVKTIFNYYKKYGYNTIVMGASFRNTGEITELAGCDYLTISPNLLEELLNSNEPVPKKLDASQASSLDIEKKSYINDEALFRFDFNEDQMAVEKLREGISKFAADAVTLKSILKEKLA</sequence>
<accession>J9MJK9</accession>